<proteinExistence type="inferred from homology"/>
<gene>
    <name type="primary">APOA4</name>
</gene>
<evidence type="ECO:0000250" key="1"/>
<evidence type="ECO:0000250" key="2">
    <source>
        <dbReference type="UniProtKB" id="P06727"/>
    </source>
</evidence>
<evidence type="ECO:0000250" key="3">
    <source>
        <dbReference type="UniProtKB" id="P33621"/>
    </source>
</evidence>
<evidence type="ECO:0000255" key="4"/>
<evidence type="ECO:0000305" key="5"/>
<keyword id="KW-0162">Chylomicron</keyword>
<keyword id="KW-0345">HDL</keyword>
<keyword id="KW-0445">Lipid transport</keyword>
<keyword id="KW-0597">Phosphoprotein</keyword>
<keyword id="KW-0677">Repeat</keyword>
<keyword id="KW-0964">Secreted</keyword>
<keyword id="KW-0732">Signal</keyword>
<keyword id="KW-0813">Transport</keyword>
<comment type="function">
    <text evidence="3">May have a role in chylomicrons and VLDL secretion and catabolism. Required for efficient activation of lipoprotein lipase by ApoC-II; potent activator of LCAT. Apoa-IV is a major component of HDL and chylomicrons.</text>
</comment>
<comment type="subunit">
    <text evidence="2">Homodimer.</text>
</comment>
<comment type="subcellular location">
    <subcellularLocation>
        <location evidence="3">Secreted</location>
    </subcellularLocation>
</comment>
<comment type="domain">
    <text evidence="3">Nine of the thirteen 22-amino acid tandem repeats (each 22-mer is actually a tandem array of two, A and B, related 11-mers) occurring in this sequence are predicted to be highly alpha-helical, and many of these helices are amphipathic. They may therefore serve as lipid-binding domains with lecithin:cholesterol acyltransferase (LCAT) activating abilities.</text>
</comment>
<comment type="PTM">
    <text evidence="1">Phosphorylation sites are present in the extracellular medium.</text>
</comment>
<comment type="similarity">
    <text evidence="5">Belongs to the apolipoprotein A1/A4/E family.</text>
</comment>
<dbReference type="EMBL" id="ML169427">
    <property type="status" value="NOT_ANNOTATED_CDS"/>
    <property type="molecule type" value="Genomic_DNA"/>
</dbReference>
<dbReference type="SMR" id="P0DTS1"/>
<dbReference type="GO" id="GO:0042627">
    <property type="term" value="C:chylomicron"/>
    <property type="evidence" value="ECO:0007669"/>
    <property type="project" value="UniProtKB-KW"/>
</dbReference>
<dbReference type="GO" id="GO:1903561">
    <property type="term" value="C:extracellular vesicle"/>
    <property type="evidence" value="ECO:0007669"/>
    <property type="project" value="TreeGrafter"/>
</dbReference>
<dbReference type="GO" id="GO:0034364">
    <property type="term" value="C:high-density lipoprotein particle"/>
    <property type="evidence" value="ECO:0007669"/>
    <property type="project" value="UniProtKB-KW"/>
</dbReference>
<dbReference type="GO" id="GO:0034362">
    <property type="term" value="C:low-density lipoprotein particle"/>
    <property type="evidence" value="ECO:0007669"/>
    <property type="project" value="TreeGrafter"/>
</dbReference>
<dbReference type="GO" id="GO:0034361">
    <property type="term" value="C:very-low-density lipoprotein particle"/>
    <property type="evidence" value="ECO:0007669"/>
    <property type="project" value="TreeGrafter"/>
</dbReference>
<dbReference type="GO" id="GO:0120020">
    <property type="term" value="F:cholesterol transfer activity"/>
    <property type="evidence" value="ECO:0007669"/>
    <property type="project" value="TreeGrafter"/>
</dbReference>
<dbReference type="GO" id="GO:0060228">
    <property type="term" value="F:phosphatidylcholine-sterol O-acyltransferase activator activity"/>
    <property type="evidence" value="ECO:0007669"/>
    <property type="project" value="TreeGrafter"/>
</dbReference>
<dbReference type="GO" id="GO:0005543">
    <property type="term" value="F:phospholipid binding"/>
    <property type="evidence" value="ECO:0007669"/>
    <property type="project" value="TreeGrafter"/>
</dbReference>
<dbReference type="GO" id="GO:0055090">
    <property type="term" value="P:acylglycerol homeostasis"/>
    <property type="evidence" value="ECO:0007669"/>
    <property type="project" value="TreeGrafter"/>
</dbReference>
<dbReference type="GO" id="GO:0033344">
    <property type="term" value="P:cholesterol efflux"/>
    <property type="evidence" value="ECO:0007669"/>
    <property type="project" value="TreeGrafter"/>
</dbReference>
<dbReference type="GO" id="GO:0008203">
    <property type="term" value="P:cholesterol metabolic process"/>
    <property type="evidence" value="ECO:0007669"/>
    <property type="project" value="TreeGrafter"/>
</dbReference>
<dbReference type="GO" id="GO:0042157">
    <property type="term" value="P:lipoprotein metabolic process"/>
    <property type="evidence" value="ECO:0007669"/>
    <property type="project" value="InterPro"/>
</dbReference>
<dbReference type="GO" id="GO:0033700">
    <property type="term" value="P:phospholipid efflux"/>
    <property type="evidence" value="ECO:0007669"/>
    <property type="project" value="TreeGrafter"/>
</dbReference>
<dbReference type="FunFam" id="1.20.120.20:FF:000004">
    <property type="entry name" value="Apolipoprotein A-IV"/>
    <property type="match status" value="1"/>
</dbReference>
<dbReference type="FunFam" id="1.20.120.20:FF:000005">
    <property type="entry name" value="Apolipoprotein A-IV"/>
    <property type="match status" value="1"/>
</dbReference>
<dbReference type="Gene3D" id="1.20.120.20">
    <property type="entry name" value="Apolipoprotein"/>
    <property type="match status" value="2"/>
</dbReference>
<dbReference type="InterPro" id="IPR000074">
    <property type="entry name" value="ApoA_E"/>
</dbReference>
<dbReference type="InterPro" id="IPR050163">
    <property type="entry name" value="Apolipoprotein_A1/A4/E"/>
</dbReference>
<dbReference type="PANTHER" id="PTHR18976">
    <property type="entry name" value="APOLIPOPROTEIN"/>
    <property type="match status" value="1"/>
</dbReference>
<dbReference type="PANTHER" id="PTHR18976:SF1">
    <property type="entry name" value="APOLIPOPROTEIN A-IV"/>
    <property type="match status" value="1"/>
</dbReference>
<dbReference type="Pfam" id="PF01442">
    <property type="entry name" value="Apolipoprotein"/>
    <property type="match status" value="1"/>
</dbReference>
<dbReference type="SUPFAM" id="SSF58113">
    <property type="entry name" value="Apolipoprotein A-I"/>
    <property type="match status" value="2"/>
</dbReference>
<accession>P0DTS1</accession>
<protein>
    <recommendedName>
        <fullName>Apolipoprotein A-IV</fullName>
        <shortName>Apo-AIV</shortName>
        <shortName>ApoA-IV</shortName>
    </recommendedName>
    <alternativeName>
        <fullName>Apolipoprotein A4</fullName>
    </alternativeName>
</protein>
<reference key="1">
    <citation type="submission" date="2018-12" db="EMBL/GenBank/DDBJ databases">
        <title>The genome of the Harbour Seal (Phoca vitulina).</title>
        <authorList>
            <person name="Culibrk L."/>
            <person name="Leelakumari S."/>
            <person name="Taylor G.A."/>
            <person name="Tse K."/>
            <person name="Cheng D."/>
            <person name="Chuah E."/>
            <person name="Kirk H."/>
            <person name="Pandoh P."/>
            <person name="Troussard A."/>
            <person name="Zhao Y."/>
            <person name="Mungall A."/>
            <person name="Moore R."/>
            <person name="Akhurst L."/>
            <person name="Marra M.A."/>
            <person name="Haulena M."/>
            <person name="Jones S.J.M."/>
        </authorList>
    </citation>
    <scope>NUCLEOTIDE SEQUENCE [LARGE SCALE GENOMIC DNA]</scope>
    <source>
        <tissue>Blood</tissue>
    </source>
</reference>
<reference key="2">
    <citation type="unpublished observations" date="2019-10">
        <authorList>
            <person name="Puppione D.L."/>
        </authorList>
    </citation>
    <scope>IDENTIFICATION</scope>
</reference>
<organism>
    <name type="scientific">Phoca vitulina</name>
    <name type="common">Harbor seal</name>
    <dbReference type="NCBI Taxonomy" id="9720"/>
    <lineage>
        <taxon>Eukaryota</taxon>
        <taxon>Metazoa</taxon>
        <taxon>Chordata</taxon>
        <taxon>Craniata</taxon>
        <taxon>Vertebrata</taxon>
        <taxon>Euteleostomi</taxon>
        <taxon>Mammalia</taxon>
        <taxon>Eutheria</taxon>
        <taxon>Laurasiatheria</taxon>
        <taxon>Carnivora</taxon>
        <taxon>Caniformia</taxon>
        <taxon>Pinnipedia</taxon>
        <taxon>Phocidae</taxon>
        <taxon>Phocinae</taxon>
        <taxon>Phoca</taxon>
    </lineage>
</organism>
<feature type="signal peptide" evidence="4">
    <location>
        <begin position="1"/>
        <end position="20"/>
    </location>
</feature>
<feature type="chain" id="PRO_0000448768" description="Apolipoprotein A-IV">
    <location>
        <begin position="21"/>
        <end position="382"/>
    </location>
</feature>
<feature type="repeat" description="1">
    <location>
        <begin position="33"/>
        <end position="54"/>
    </location>
</feature>
<feature type="repeat" description="2">
    <location>
        <begin position="60"/>
        <end position="81"/>
    </location>
</feature>
<feature type="repeat" description="3">
    <location>
        <begin position="82"/>
        <end position="103"/>
    </location>
</feature>
<feature type="repeat" description="4">
    <location>
        <begin position="115"/>
        <end position="136"/>
    </location>
</feature>
<feature type="repeat" description="5">
    <location>
        <begin position="137"/>
        <end position="158"/>
    </location>
</feature>
<feature type="repeat" description="6">
    <location>
        <begin position="159"/>
        <end position="180"/>
    </location>
</feature>
<feature type="repeat" description="7">
    <location>
        <begin position="181"/>
        <end position="202"/>
    </location>
</feature>
<feature type="repeat" description="8">
    <location>
        <begin position="203"/>
        <end position="224"/>
    </location>
</feature>
<feature type="repeat" description="9">
    <location>
        <begin position="225"/>
        <end position="246"/>
    </location>
</feature>
<feature type="repeat" description="10">
    <location>
        <begin position="247"/>
        <end position="268"/>
    </location>
</feature>
<feature type="repeat" description="11">
    <location>
        <begin position="269"/>
        <end position="286"/>
    </location>
</feature>
<feature type="repeat" description="12">
    <location>
        <begin position="287"/>
        <end position="308"/>
    </location>
</feature>
<feature type="repeat" description="13">
    <location>
        <begin position="309"/>
        <end position="330"/>
    </location>
</feature>
<feature type="region of interest" description="13 X 22 AA approximate tandem repeats">
    <location>
        <begin position="33"/>
        <end position="330"/>
    </location>
</feature>
<name>APOA4_PHOVI</name>
<sequence>MFLKAVVLTLSLVAVTGAQAEVSANQVATVVWDYFSQLSNNAKEAVEHLQKSELTQQLNALFQDKIGQVNTYTDNLQKKLVSFAMELHERLRKDSEKLKEEIRKELEELRAGLLPHADEVSRKIGDNMHELQQRLGPYAEELRTQVNTHAEHLRNQLTAHAQRMETTLRQNVGNLQASLTPYADELKAKIDQNVEELKGHLTPYADELKVKIDQNVEDLRRSLAPYAQDVQEKLNHQLEGLAFQMKKNAEELKAKISANADELRQKLVPVAEVVRGKLRDNTEELQKSLAELSSHLDRQVEEFRRNMGPYGETFNKALLQQVEELRQKLGPYAGDVEDHLSFLEKDLRDKVNSFFSTLEEKENQDMLVAVPELQLTPVPLES</sequence>